<geneLocation type="chloroplast"/>
<keyword id="KW-0066">ATP synthesis</keyword>
<keyword id="KW-0067">ATP-binding</keyword>
<keyword id="KW-0139">CF(1)</keyword>
<keyword id="KW-0150">Chloroplast</keyword>
<keyword id="KW-0375">Hydrogen ion transport</keyword>
<keyword id="KW-0406">Ion transport</keyword>
<keyword id="KW-0472">Membrane</keyword>
<keyword id="KW-0547">Nucleotide-binding</keyword>
<keyword id="KW-0934">Plastid</keyword>
<keyword id="KW-0793">Thylakoid</keyword>
<keyword id="KW-1278">Translocase</keyword>
<keyword id="KW-0813">Transport</keyword>
<organism>
    <name type="scientific">Populus tremuloides</name>
    <name type="common">Quaking aspen</name>
    <dbReference type="NCBI Taxonomy" id="3693"/>
    <lineage>
        <taxon>Eukaryota</taxon>
        <taxon>Viridiplantae</taxon>
        <taxon>Streptophyta</taxon>
        <taxon>Embryophyta</taxon>
        <taxon>Tracheophyta</taxon>
        <taxon>Spermatophyta</taxon>
        <taxon>Magnoliopsida</taxon>
        <taxon>eudicotyledons</taxon>
        <taxon>Gunneridae</taxon>
        <taxon>Pentapetalae</taxon>
        <taxon>rosids</taxon>
        <taxon>fabids</taxon>
        <taxon>Malpighiales</taxon>
        <taxon>Salicaceae</taxon>
        <taxon>Saliceae</taxon>
        <taxon>Populus</taxon>
    </lineage>
</organism>
<dbReference type="EC" id="7.1.2.2" evidence="1"/>
<dbReference type="EMBL" id="AF209658">
    <property type="protein sequence ID" value="AAK72833.1"/>
    <property type="molecule type" value="Genomic_DNA"/>
</dbReference>
<dbReference type="SMR" id="Q95FL8"/>
<dbReference type="GO" id="GO:0009535">
    <property type="term" value="C:chloroplast thylakoid membrane"/>
    <property type="evidence" value="ECO:0007669"/>
    <property type="project" value="UniProtKB-SubCell"/>
</dbReference>
<dbReference type="GO" id="GO:0005739">
    <property type="term" value="C:mitochondrion"/>
    <property type="evidence" value="ECO:0007669"/>
    <property type="project" value="GOC"/>
</dbReference>
<dbReference type="GO" id="GO:0045259">
    <property type="term" value="C:proton-transporting ATP synthase complex"/>
    <property type="evidence" value="ECO:0007669"/>
    <property type="project" value="UniProtKB-KW"/>
</dbReference>
<dbReference type="GO" id="GO:0005524">
    <property type="term" value="F:ATP binding"/>
    <property type="evidence" value="ECO:0007669"/>
    <property type="project" value="UniProtKB-UniRule"/>
</dbReference>
<dbReference type="GO" id="GO:0016887">
    <property type="term" value="F:ATP hydrolysis activity"/>
    <property type="evidence" value="ECO:0007669"/>
    <property type="project" value="InterPro"/>
</dbReference>
<dbReference type="GO" id="GO:0046933">
    <property type="term" value="F:proton-transporting ATP synthase activity, rotational mechanism"/>
    <property type="evidence" value="ECO:0007669"/>
    <property type="project" value="UniProtKB-UniRule"/>
</dbReference>
<dbReference type="GO" id="GO:0042776">
    <property type="term" value="P:proton motive force-driven mitochondrial ATP synthesis"/>
    <property type="evidence" value="ECO:0007669"/>
    <property type="project" value="TreeGrafter"/>
</dbReference>
<dbReference type="CDD" id="cd18110">
    <property type="entry name" value="ATP-synt_F1_beta_C"/>
    <property type="match status" value="1"/>
</dbReference>
<dbReference type="CDD" id="cd18115">
    <property type="entry name" value="ATP-synt_F1_beta_N"/>
    <property type="match status" value="1"/>
</dbReference>
<dbReference type="CDD" id="cd01133">
    <property type="entry name" value="F1-ATPase_beta_CD"/>
    <property type="match status" value="1"/>
</dbReference>
<dbReference type="FunFam" id="1.10.1140.10:FF:000001">
    <property type="entry name" value="ATP synthase subunit beta"/>
    <property type="match status" value="1"/>
</dbReference>
<dbReference type="FunFam" id="3.40.50.12240:FF:000006">
    <property type="entry name" value="ATP synthase subunit beta"/>
    <property type="match status" value="1"/>
</dbReference>
<dbReference type="FunFam" id="3.40.50.300:FF:000004">
    <property type="entry name" value="ATP synthase subunit beta"/>
    <property type="match status" value="1"/>
</dbReference>
<dbReference type="FunFam" id="2.40.10.170:FF:000002">
    <property type="entry name" value="ATP synthase subunit beta, chloroplastic"/>
    <property type="match status" value="1"/>
</dbReference>
<dbReference type="Gene3D" id="2.40.10.170">
    <property type="match status" value="1"/>
</dbReference>
<dbReference type="Gene3D" id="1.10.1140.10">
    <property type="entry name" value="Bovine Mitochondrial F1-atpase, Atp Synthase Beta Chain, Chain D, domain 3"/>
    <property type="match status" value="1"/>
</dbReference>
<dbReference type="Gene3D" id="3.40.50.300">
    <property type="entry name" value="P-loop containing nucleotide triphosphate hydrolases"/>
    <property type="match status" value="1"/>
</dbReference>
<dbReference type="HAMAP" id="MF_01347">
    <property type="entry name" value="ATP_synth_beta_bact"/>
    <property type="match status" value="1"/>
</dbReference>
<dbReference type="InterPro" id="IPR003593">
    <property type="entry name" value="AAA+_ATPase"/>
</dbReference>
<dbReference type="InterPro" id="IPR055190">
    <property type="entry name" value="ATP-synt_VA_C"/>
</dbReference>
<dbReference type="InterPro" id="IPR005722">
    <property type="entry name" value="ATP_synth_F1_bsu"/>
</dbReference>
<dbReference type="InterPro" id="IPR020003">
    <property type="entry name" value="ATPase_a/bsu_AS"/>
</dbReference>
<dbReference type="InterPro" id="IPR050053">
    <property type="entry name" value="ATPase_alpha/beta_chains"/>
</dbReference>
<dbReference type="InterPro" id="IPR004100">
    <property type="entry name" value="ATPase_F1/V1/A1_a/bsu_N"/>
</dbReference>
<dbReference type="InterPro" id="IPR036121">
    <property type="entry name" value="ATPase_F1/V1/A1_a/bsu_N_sf"/>
</dbReference>
<dbReference type="InterPro" id="IPR000194">
    <property type="entry name" value="ATPase_F1/V1/A1_a/bsu_nucl-bd"/>
</dbReference>
<dbReference type="InterPro" id="IPR024034">
    <property type="entry name" value="ATPase_F1/V1_b/a_C"/>
</dbReference>
<dbReference type="InterPro" id="IPR027417">
    <property type="entry name" value="P-loop_NTPase"/>
</dbReference>
<dbReference type="NCBIfam" id="TIGR01039">
    <property type="entry name" value="atpD"/>
    <property type="match status" value="1"/>
</dbReference>
<dbReference type="PANTHER" id="PTHR15184">
    <property type="entry name" value="ATP SYNTHASE"/>
    <property type="match status" value="1"/>
</dbReference>
<dbReference type="PANTHER" id="PTHR15184:SF71">
    <property type="entry name" value="ATP SYNTHASE SUBUNIT BETA, MITOCHONDRIAL"/>
    <property type="match status" value="1"/>
</dbReference>
<dbReference type="Pfam" id="PF00006">
    <property type="entry name" value="ATP-synt_ab"/>
    <property type="match status" value="1"/>
</dbReference>
<dbReference type="Pfam" id="PF02874">
    <property type="entry name" value="ATP-synt_ab_N"/>
    <property type="match status" value="1"/>
</dbReference>
<dbReference type="Pfam" id="PF22919">
    <property type="entry name" value="ATP-synt_VA_C"/>
    <property type="match status" value="1"/>
</dbReference>
<dbReference type="SMART" id="SM00382">
    <property type="entry name" value="AAA"/>
    <property type="match status" value="1"/>
</dbReference>
<dbReference type="SUPFAM" id="SSF47917">
    <property type="entry name" value="C-terminal domain of alpha and beta subunits of F1 ATP synthase"/>
    <property type="match status" value="1"/>
</dbReference>
<dbReference type="SUPFAM" id="SSF50615">
    <property type="entry name" value="N-terminal domain of alpha and beta subunits of F1 ATP synthase"/>
    <property type="match status" value="1"/>
</dbReference>
<dbReference type="SUPFAM" id="SSF52540">
    <property type="entry name" value="P-loop containing nucleoside triphosphate hydrolases"/>
    <property type="match status" value="1"/>
</dbReference>
<dbReference type="PROSITE" id="PS00152">
    <property type="entry name" value="ATPASE_ALPHA_BETA"/>
    <property type="match status" value="1"/>
</dbReference>
<feature type="chain" id="PRO_0000254514" description="ATP synthase subunit beta, chloroplastic">
    <location>
        <begin position="1"/>
        <end position="498"/>
    </location>
</feature>
<feature type="binding site" evidence="1">
    <location>
        <begin position="172"/>
        <end position="179"/>
    </location>
    <ligand>
        <name>ATP</name>
        <dbReference type="ChEBI" id="CHEBI:30616"/>
    </ligand>
</feature>
<sequence>MRINPTTSGPGVSALEKKNLGHIAQIIGPVLDVVFPPGKMPNIYNALVVKGRDTVSQQINVTCEVQQLLGNNRVRAVAMSATEGLMRGMEVIDTGAPLSVPVGGATLGRIFNVLGEPVDDLRPVDTGTTSPIHRSAPAFIQLDTKLSIFETGIKVVDLLAPYRRGGKIGLFGGAGVGKTVLIMELINNIAKAHGGVSVFGGVGERTREGNDLYMEMKESGVINEENIAESKVALVYGQMNEPPGARMRVGLTALTMAEYFRDVNEQDVLLFIDNIFRFVQAGSEVSALLGRMPSAVGYQPTLSTEMGTLQERITSTKEGSITSIQAVYVPADDLTDPAPATTFAHLDATTVLSRGLAAKGIYPAVDPLDSTSTMLQPQIVGEEHYETAQRVKQTLQRYKELQDIIAILGLDELSEEDRLTVARARKIERFLSQPFFVAEVFTGSPGKYVGLAETIRGFKLILSGELDSLPEQAFYLVGNIDEATAKATNLEMENNLKK</sequence>
<proteinExistence type="inferred from homology"/>
<gene>
    <name evidence="1" type="primary">atpB</name>
</gene>
<protein>
    <recommendedName>
        <fullName evidence="1">ATP synthase subunit beta, chloroplastic</fullName>
        <ecNumber evidence="1">7.1.2.2</ecNumber>
    </recommendedName>
    <alternativeName>
        <fullName evidence="1">ATP synthase F1 sector subunit beta</fullName>
    </alternativeName>
    <alternativeName>
        <fullName evidence="1">F-ATPase subunit beta</fullName>
    </alternativeName>
</protein>
<evidence type="ECO:0000255" key="1">
    <source>
        <dbReference type="HAMAP-Rule" id="MF_01347"/>
    </source>
</evidence>
<comment type="function">
    <text evidence="1">Produces ATP from ADP in the presence of a proton gradient across the membrane. The catalytic sites are hosted primarily by the beta subunits.</text>
</comment>
<comment type="catalytic activity">
    <reaction evidence="1">
        <text>ATP + H2O + 4 H(+)(in) = ADP + phosphate + 5 H(+)(out)</text>
        <dbReference type="Rhea" id="RHEA:57720"/>
        <dbReference type="ChEBI" id="CHEBI:15377"/>
        <dbReference type="ChEBI" id="CHEBI:15378"/>
        <dbReference type="ChEBI" id="CHEBI:30616"/>
        <dbReference type="ChEBI" id="CHEBI:43474"/>
        <dbReference type="ChEBI" id="CHEBI:456216"/>
        <dbReference type="EC" id="7.1.2.2"/>
    </reaction>
</comment>
<comment type="subunit">
    <text evidence="1">F-type ATPases have 2 components, CF(1) - the catalytic core - and CF(0) - the membrane proton channel. CF(1) has five subunits: alpha(3), beta(3), gamma(1), delta(1), epsilon(1). CF(0) has four main subunits: a(1), b(1), b'(1) and c(9-12).</text>
</comment>
<comment type="subcellular location">
    <subcellularLocation>
        <location evidence="1">Plastid</location>
        <location evidence="1">Chloroplast thylakoid membrane</location>
        <topology evidence="1">Peripheral membrane protein</topology>
    </subcellularLocation>
</comment>
<comment type="similarity">
    <text evidence="1">Belongs to the ATPase alpha/beta chains family.</text>
</comment>
<accession>Q95FL8</accession>
<reference key="1">
    <citation type="submission" date="1999-11" db="EMBL/GenBank/DDBJ databases">
        <title>Angiosperm phylogeny inferred from multiple genes as a tool for comparative biology.</title>
        <authorList>
            <person name="Soltis P.S."/>
            <person name="Soltis D.E."/>
            <person name="Chase M.W."/>
        </authorList>
    </citation>
    <scope>NUCLEOTIDE SEQUENCE [GENOMIC DNA]</scope>
</reference>
<name>ATPB_POPTM</name>